<comment type="function">
    <text evidence="3">Final heterodimeric neurohormone released at the end of the molting cycle, involved in the sclerotization (tanning) of the insect cuticle, melanization and wing spreading.</text>
</comment>
<comment type="subunit">
    <text evidence="1">Heterodimer of burs and pburs.</text>
</comment>
<comment type="subcellular location">
    <subcellularLocation>
        <location evidence="1">Secreted</location>
    </subcellularLocation>
</comment>
<comment type="sequence caution" evidence="5">
    <conflict type="erroneous initiation">
        <sequence resource="EMBL-CDS" id="AAX18444"/>
    </conflict>
</comment>
<reference evidence="6" key="1">
    <citation type="journal article" date="2005" name="Proc. Natl. Acad. Sci. U.S.A.">
        <title>Bursicon, the insect cuticle-hardening hormone, is a heterodimeric cystine knot protein that activates G protein-coupled receptor LGR2.</title>
        <authorList>
            <person name="Luo C.-W."/>
            <person name="Dewey E.M."/>
            <person name="Sudo S."/>
            <person name="Ewer J."/>
            <person name="Hsu S.Y."/>
            <person name="Honegger H.-W."/>
            <person name="Hsueh A.J.W."/>
        </authorList>
    </citation>
    <scope>NUCLEOTIDE SEQUENCE [MRNA]</scope>
</reference>
<reference key="2">
    <citation type="journal article" date="2002" name="Science">
        <title>The genome sequence of the malaria mosquito Anopheles gambiae.</title>
        <authorList>
            <person name="Holt R.A."/>
            <person name="Subramanian G.M."/>
            <person name="Halpern A."/>
            <person name="Sutton G.G."/>
            <person name="Charlab R."/>
            <person name="Nusskern D.R."/>
            <person name="Wincker P."/>
            <person name="Clark A.G."/>
            <person name="Ribeiro J.M.C."/>
            <person name="Wides R."/>
            <person name="Salzberg S.L."/>
            <person name="Loftus B.J."/>
            <person name="Yandell M.D."/>
            <person name="Majoros W.H."/>
            <person name="Rusch D.B."/>
            <person name="Lai Z."/>
            <person name="Kraft C.L."/>
            <person name="Abril J.F."/>
            <person name="Anthouard V."/>
            <person name="Arensburger P."/>
            <person name="Atkinson P.W."/>
            <person name="Baden H."/>
            <person name="de Berardinis V."/>
            <person name="Baldwin D."/>
            <person name="Benes V."/>
            <person name="Biedler J."/>
            <person name="Blass C."/>
            <person name="Bolanos R."/>
            <person name="Boscus D."/>
            <person name="Barnstead M."/>
            <person name="Cai S."/>
            <person name="Center A."/>
            <person name="Chaturverdi K."/>
            <person name="Christophides G.K."/>
            <person name="Chrystal M.A.M."/>
            <person name="Clamp M."/>
            <person name="Cravchik A."/>
            <person name="Curwen V."/>
            <person name="Dana A."/>
            <person name="Delcher A."/>
            <person name="Dew I."/>
            <person name="Evans C.A."/>
            <person name="Flanigan M."/>
            <person name="Grundschober-Freimoser A."/>
            <person name="Friedli L."/>
            <person name="Gu Z."/>
            <person name="Guan P."/>
            <person name="Guigo R."/>
            <person name="Hillenmeyer M.E."/>
            <person name="Hladun S.L."/>
            <person name="Hogan J.R."/>
            <person name="Hong Y.S."/>
            <person name="Hoover J."/>
            <person name="Jaillon O."/>
            <person name="Ke Z."/>
            <person name="Kodira C.D."/>
            <person name="Kokoza E."/>
            <person name="Koutsos A."/>
            <person name="Letunic I."/>
            <person name="Levitsky A.A."/>
            <person name="Liang Y."/>
            <person name="Lin J.-J."/>
            <person name="Lobo N.F."/>
            <person name="Lopez J.R."/>
            <person name="Malek J.A."/>
            <person name="McIntosh T.C."/>
            <person name="Meister S."/>
            <person name="Miller J.R."/>
            <person name="Mobarry C."/>
            <person name="Mongin E."/>
            <person name="Murphy S.D."/>
            <person name="O'Brochta D.A."/>
            <person name="Pfannkoch C."/>
            <person name="Qi R."/>
            <person name="Regier M.A."/>
            <person name="Remington K."/>
            <person name="Shao H."/>
            <person name="Sharakhova M.V."/>
            <person name="Sitter C.D."/>
            <person name="Shetty J."/>
            <person name="Smith T.J."/>
            <person name="Strong R."/>
            <person name="Sun J."/>
            <person name="Thomasova D."/>
            <person name="Ton L.Q."/>
            <person name="Topalis P."/>
            <person name="Tu Z.J."/>
            <person name="Unger M.F."/>
            <person name="Walenz B."/>
            <person name="Wang A.H."/>
            <person name="Wang J."/>
            <person name="Wang M."/>
            <person name="Wang X."/>
            <person name="Woodford K.J."/>
            <person name="Wortman J.R."/>
            <person name="Wu M."/>
            <person name="Yao A."/>
            <person name="Zdobnov E.M."/>
            <person name="Zhang H."/>
            <person name="Zhao Q."/>
            <person name="Zhao S."/>
            <person name="Zhu S.C."/>
            <person name="Zhimulev I."/>
            <person name="Coluzzi M."/>
            <person name="della Torre A."/>
            <person name="Roth C.W."/>
            <person name="Louis C."/>
            <person name="Kalush F."/>
            <person name="Mural R.J."/>
            <person name="Myers E.W."/>
            <person name="Adams M.D."/>
            <person name="Smith H.O."/>
            <person name="Broder S."/>
            <person name="Gardner M.J."/>
            <person name="Fraser C.M."/>
            <person name="Birney E."/>
            <person name="Bork P."/>
            <person name="Brey P.T."/>
            <person name="Venter J.C."/>
            <person name="Weissenbach J."/>
            <person name="Kafatos F.C."/>
            <person name="Collins F.H."/>
            <person name="Hoffman S.L."/>
        </authorList>
    </citation>
    <scope>NUCLEOTIDE SEQUENCE [LARGE SCALE GENOMIC DNA]</scope>
    <source>
        <strain>PEST</strain>
    </source>
</reference>
<reference evidence="5 7" key="3">
    <citation type="journal article" date="2005" name="FEBS Lett.">
        <title>Drosophila molting neurohormone bursicon is a heterodimer and the natural agonist of the orphan receptor DLGR2.</title>
        <authorList>
            <person name="Mendive F.M."/>
            <person name="Van Loy T."/>
            <person name="Claeysen S."/>
            <person name="Poels J."/>
            <person name="Williamson M."/>
            <person name="Hauser F."/>
            <person name="Grimmelikhuijzen C.J.P."/>
            <person name="Vassart G."/>
            <person name="Vanden Broeck J.J.M."/>
        </authorList>
    </citation>
    <scope>IDENTIFICATION</scope>
</reference>
<organism>
    <name type="scientific">Anopheles gambiae</name>
    <name type="common">African malaria mosquito</name>
    <dbReference type="NCBI Taxonomy" id="7165"/>
    <lineage>
        <taxon>Eukaryota</taxon>
        <taxon>Metazoa</taxon>
        <taxon>Ecdysozoa</taxon>
        <taxon>Arthropoda</taxon>
        <taxon>Hexapoda</taxon>
        <taxon>Insecta</taxon>
        <taxon>Pterygota</taxon>
        <taxon>Neoptera</taxon>
        <taxon>Endopterygota</taxon>
        <taxon>Diptera</taxon>
        <taxon>Nematocera</taxon>
        <taxon>Culicoidea</taxon>
        <taxon>Culicidae</taxon>
        <taxon>Anophelinae</taxon>
        <taxon>Anopheles</taxon>
    </lineage>
</organism>
<proteinExistence type="evidence at transcript level"/>
<protein>
    <recommendedName>
        <fullName>Partner of bursicon</fullName>
    </recommendedName>
    <alternativeName>
        <fullName>Bursicon subunit beta</fullName>
    </alternativeName>
</protein>
<name>PBURS_ANOGA</name>
<evidence type="ECO:0000250" key="1"/>
<evidence type="ECO:0000250" key="2">
    <source>
        <dbReference type="UniProtKB" id="P04275"/>
    </source>
</evidence>
<evidence type="ECO:0000250" key="3">
    <source>
        <dbReference type="UniProtKB" id="Q9VJS7"/>
    </source>
</evidence>
<evidence type="ECO:0000255" key="4"/>
<evidence type="ECO:0000305" key="5"/>
<evidence type="ECO:0000312" key="6">
    <source>
        <dbReference type="EMBL" id="AAX18444.1"/>
    </source>
</evidence>
<evidence type="ECO:0000312" key="7">
    <source>
        <dbReference type="EMBL" id="CAH74225.1"/>
    </source>
</evidence>
<feature type="signal peptide" evidence="4">
    <location>
        <begin position="1"/>
        <end position="35"/>
    </location>
</feature>
<feature type="chain" id="PRO_0000223889" description="Partner of bursicon" evidence="4">
    <location>
        <begin position="36"/>
        <end position="153"/>
    </location>
</feature>
<feature type="domain" description="CTCK" evidence="4">
    <location>
        <begin position="44"/>
        <end position="139"/>
    </location>
</feature>
<feature type="disulfide bond" evidence="2">
    <location>
        <begin position="44"/>
        <end position="102"/>
    </location>
</feature>
<feature type="disulfide bond" evidence="2">
    <location>
        <begin position="68"/>
        <end position="117"/>
    </location>
</feature>
<feature type="disulfide bond" evidence="2">
    <location>
        <begin position="77"/>
        <end position="143"/>
    </location>
</feature>
<feature type="disulfide bond" evidence="2">
    <location>
        <begin position="81"/>
        <end position="145"/>
    </location>
</feature>
<feature type="disulfide bond" evidence="2">
    <location>
        <begin position="99"/>
        <end position="148"/>
    </location>
</feature>
<feature type="disulfide bond" description="Interchain" evidence="2">
    <location>
        <position position="101"/>
    </location>
</feature>
<keyword id="KW-1015">Disulfide bond</keyword>
<keyword id="KW-0372">Hormone</keyword>
<keyword id="KW-1185">Reference proteome</keyword>
<keyword id="KW-0964">Secreted</keyword>
<keyword id="KW-0732">Signal</keyword>
<gene>
    <name evidence="3" type="primary">pburs</name>
    <name type="ORF">AGAP004506</name>
</gene>
<sequence>MCNSVRTALAASNCCSIVLCCVLLLTLTLTVAVTAQHNQADETCETLPSEIHLIKEEYDELGRLYRTCNGDVTVNKCEGKCNSQVQPSVITATGFLKECYCCRESFLRERQLQLTHCYDPDGVRMTDHESATMEIRLKEPVDCKCFKCGEMVR</sequence>
<accession>Q566B3</accession>
<accession>Q32TG5</accession>
<accession>Q7QA00</accession>
<dbReference type="EMBL" id="AY823259">
    <property type="protein sequence ID" value="AAX18444.1"/>
    <property type="status" value="ALT_INIT"/>
    <property type="molecule type" value="mRNA"/>
</dbReference>
<dbReference type="EMBL" id="AAAB01008898">
    <property type="protein sequence ID" value="EAA09095.3"/>
    <property type="molecule type" value="Genomic_DNA"/>
</dbReference>
<dbReference type="EMBL" id="BN000689">
    <property type="protein sequence ID" value="CAH74225.1"/>
    <property type="molecule type" value="mRNA"/>
</dbReference>
<dbReference type="RefSeq" id="XP_313804.3">
    <property type="nucleotide sequence ID" value="XM_313804.3"/>
</dbReference>
<dbReference type="FunCoup" id="Q566B3">
    <property type="interactions" value="1"/>
</dbReference>
<dbReference type="STRING" id="7165.Q566B3"/>
<dbReference type="PaxDb" id="7165-AGAP004506-PA"/>
<dbReference type="EnsemblMetazoa" id="AGAP004506-RA">
    <property type="protein sequence ID" value="AGAP004506-PA"/>
    <property type="gene ID" value="AGAP004506"/>
</dbReference>
<dbReference type="GeneID" id="1274652"/>
<dbReference type="KEGG" id="aga:1274652"/>
<dbReference type="CTD" id="34845"/>
<dbReference type="VEuPathDB" id="VectorBase:AGAMI1_005347"/>
<dbReference type="VEuPathDB" id="VectorBase:AGAP004506"/>
<dbReference type="eggNOG" id="ENOG502S111">
    <property type="taxonomic scope" value="Eukaryota"/>
</dbReference>
<dbReference type="HOGENOM" id="CLU_145016_0_0_1"/>
<dbReference type="InParanoid" id="Q566B3"/>
<dbReference type="OMA" id="ECKCYKC"/>
<dbReference type="OrthoDB" id="786951at2759"/>
<dbReference type="PhylomeDB" id="Q566B3"/>
<dbReference type="Proteomes" id="UP000007062">
    <property type="component" value="Chromosome 2R"/>
</dbReference>
<dbReference type="GO" id="GO:0031395">
    <property type="term" value="C:bursicon neuropeptide hormone complex"/>
    <property type="evidence" value="ECO:0007669"/>
    <property type="project" value="InterPro"/>
</dbReference>
<dbReference type="GO" id="GO:0005576">
    <property type="term" value="C:extracellular region"/>
    <property type="evidence" value="ECO:0000318"/>
    <property type="project" value="GO_Central"/>
</dbReference>
<dbReference type="GO" id="GO:0001664">
    <property type="term" value="F:G protein-coupled receptor binding"/>
    <property type="evidence" value="ECO:0007669"/>
    <property type="project" value="InterPro"/>
</dbReference>
<dbReference type="GO" id="GO:0005184">
    <property type="term" value="F:neuropeptide hormone activity"/>
    <property type="evidence" value="ECO:0007669"/>
    <property type="project" value="InterPro"/>
</dbReference>
<dbReference type="GO" id="GO:0007186">
    <property type="term" value="P:G protein-coupled receptor signaling pathway"/>
    <property type="evidence" value="ECO:0000318"/>
    <property type="project" value="GO_Central"/>
</dbReference>
<dbReference type="FunFam" id="2.10.90.10:FF:000078">
    <property type="entry name" value="Putative bursicon beta"/>
    <property type="match status" value="1"/>
</dbReference>
<dbReference type="Gene3D" id="2.10.90.10">
    <property type="entry name" value="Cystine-knot cytokines"/>
    <property type="match status" value="1"/>
</dbReference>
<dbReference type="InterPro" id="IPR034441">
    <property type="entry name" value="Bursicon_suB"/>
</dbReference>
<dbReference type="InterPro" id="IPR029034">
    <property type="entry name" value="Cystine-knot_cytokine"/>
</dbReference>
<dbReference type="PANTHER" id="PTHR41151">
    <property type="entry name" value="PARTNER OF BURSICON"/>
    <property type="match status" value="1"/>
</dbReference>
<dbReference type="PANTHER" id="PTHR41151:SF1">
    <property type="entry name" value="PARTNER OF BURSICON"/>
    <property type="match status" value="1"/>
</dbReference>